<comment type="function">
    <text evidence="1">Component of the A-type ATP synthase that produces ATP from ADP in the presence of a proton gradient across the membrane. The B chain is a regulatory subunit.</text>
</comment>
<comment type="subunit">
    <text evidence="1">Has multiple subunits with at least A(3), B(3), C, D, E, F, H, I and proteolipid K(x).</text>
</comment>
<comment type="subcellular location">
    <subcellularLocation>
        <location evidence="1">Cell membrane</location>
        <topology evidence="1">Peripheral membrane protein</topology>
    </subcellularLocation>
</comment>
<comment type="similarity">
    <text evidence="1">Belongs to the ATPase alpha/beta chains family.</text>
</comment>
<comment type="sequence caution" evidence="3">
    <conflict type="erroneous initiation">
        <sequence resource="EMBL-CDS" id="AAB64417"/>
    </conflict>
    <text>Extended N-terminus.</text>
</comment>
<keyword id="KW-0066">ATP synthesis</keyword>
<keyword id="KW-1003">Cell membrane</keyword>
<keyword id="KW-0375">Hydrogen ion transport</keyword>
<keyword id="KW-0406">Ion transport</keyword>
<keyword id="KW-0472">Membrane</keyword>
<keyword id="KW-0813">Transport</keyword>
<evidence type="ECO:0000255" key="1">
    <source>
        <dbReference type="HAMAP-Rule" id="MF_00310"/>
    </source>
</evidence>
<evidence type="ECO:0000303" key="2">
    <source>
    </source>
</evidence>
<evidence type="ECO:0000305" key="3"/>
<name>AATB_DESSY</name>
<proteinExistence type="inferred from homology"/>
<protein>
    <recommendedName>
        <fullName evidence="1">A-type ATP synthase subunit B</fullName>
    </recommendedName>
    <alternativeName>
        <fullName evidence="2">V-ATPase subunit B</fullName>
    </alternativeName>
</protein>
<gene>
    <name evidence="1 2" type="primary">atpB</name>
</gene>
<dbReference type="EMBL" id="U96487">
    <property type="protein sequence ID" value="AAB64417.1"/>
    <property type="status" value="ALT_INIT"/>
    <property type="molecule type" value="Genomic_DNA"/>
</dbReference>
<dbReference type="PIR" id="T44675">
    <property type="entry name" value="T44675"/>
</dbReference>
<dbReference type="SMR" id="O06505"/>
<dbReference type="GO" id="GO:0005886">
    <property type="term" value="C:plasma membrane"/>
    <property type="evidence" value="ECO:0007669"/>
    <property type="project" value="UniProtKB-SubCell"/>
</dbReference>
<dbReference type="GO" id="GO:0033178">
    <property type="term" value="C:proton-transporting two-sector ATPase complex, catalytic domain"/>
    <property type="evidence" value="ECO:0007669"/>
    <property type="project" value="InterPro"/>
</dbReference>
<dbReference type="GO" id="GO:0005524">
    <property type="term" value="F:ATP binding"/>
    <property type="evidence" value="ECO:0007669"/>
    <property type="project" value="UniProtKB-UniRule"/>
</dbReference>
<dbReference type="GO" id="GO:0046933">
    <property type="term" value="F:proton-transporting ATP synthase activity, rotational mechanism"/>
    <property type="evidence" value="ECO:0007669"/>
    <property type="project" value="UniProtKB-UniRule"/>
</dbReference>
<dbReference type="GO" id="GO:0042777">
    <property type="term" value="P:proton motive force-driven plasma membrane ATP synthesis"/>
    <property type="evidence" value="ECO:0007669"/>
    <property type="project" value="UniProtKB-UniRule"/>
</dbReference>
<dbReference type="CDD" id="cd18112">
    <property type="entry name" value="ATP-synt_V_A-type_beta_C"/>
    <property type="match status" value="1"/>
</dbReference>
<dbReference type="CDD" id="cd18118">
    <property type="entry name" value="ATP-synt_V_A-type_beta_N"/>
    <property type="match status" value="1"/>
</dbReference>
<dbReference type="CDD" id="cd01135">
    <property type="entry name" value="V_A-ATPase_B"/>
    <property type="match status" value="1"/>
</dbReference>
<dbReference type="Gene3D" id="3.40.50.12240">
    <property type="match status" value="1"/>
</dbReference>
<dbReference type="HAMAP" id="MF_00310">
    <property type="entry name" value="ATP_synth_B_arch"/>
    <property type="match status" value="1"/>
</dbReference>
<dbReference type="InterPro" id="IPR055190">
    <property type="entry name" value="ATP-synt_VA_C"/>
</dbReference>
<dbReference type="InterPro" id="IPR020003">
    <property type="entry name" value="ATPase_a/bsu_AS"/>
</dbReference>
<dbReference type="InterPro" id="IPR005724">
    <property type="entry name" value="ATPase_A1-cplx_bsu"/>
</dbReference>
<dbReference type="InterPro" id="IPR004100">
    <property type="entry name" value="ATPase_F1/V1/A1_a/bsu_N"/>
</dbReference>
<dbReference type="InterPro" id="IPR000194">
    <property type="entry name" value="ATPase_F1/V1/A1_a/bsu_nucl-bd"/>
</dbReference>
<dbReference type="InterPro" id="IPR027417">
    <property type="entry name" value="P-loop_NTPase"/>
</dbReference>
<dbReference type="InterPro" id="IPR022879">
    <property type="entry name" value="V-ATPase_su_B/beta"/>
</dbReference>
<dbReference type="NCBIfam" id="TIGR01041">
    <property type="entry name" value="ATP_syn_B_arch"/>
    <property type="match status" value="1"/>
</dbReference>
<dbReference type="NCBIfam" id="NF003235">
    <property type="entry name" value="PRK04196.1"/>
    <property type="match status" value="1"/>
</dbReference>
<dbReference type="PANTHER" id="PTHR43389">
    <property type="entry name" value="V-TYPE PROTON ATPASE SUBUNIT B"/>
    <property type="match status" value="1"/>
</dbReference>
<dbReference type="PANTHER" id="PTHR43389:SF4">
    <property type="entry name" value="V-TYPE PROTON ATPASE SUBUNIT B"/>
    <property type="match status" value="1"/>
</dbReference>
<dbReference type="Pfam" id="PF00006">
    <property type="entry name" value="ATP-synt_ab"/>
    <property type="match status" value="1"/>
</dbReference>
<dbReference type="Pfam" id="PF02874">
    <property type="entry name" value="ATP-synt_ab_N"/>
    <property type="match status" value="1"/>
</dbReference>
<dbReference type="Pfam" id="PF22919">
    <property type="entry name" value="ATP-synt_VA_C"/>
    <property type="match status" value="1"/>
</dbReference>
<dbReference type="PIRSF" id="PIRSF039114">
    <property type="entry name" value="V-ATPsynth_beta/V-ATPase_B"/>
    <property type="match status" value="1"/>
</dbReference>
<dbReference type="SUPFAM" id="SSF47917">
    <property type="entry name" value="C-terminal domain of alpha and beta subunits of F1 ATP synthase"/>
    <property type="match status" value="1"/>
</dbReference>
<dbReference type="SUPFAM" id="SSF52540">
    <property type="entry name" value="P-loop containing nucleoside triphosphate hydrolases"/>
    <property type="match status" value="1"/>
</dbReference>
<dbReference type="PROSITE" id="PS00152">
    <property type="entry name" value="ATPASE_ALPHA_BETA"/>
    <property type="match status" value="1"/>
</dbReference>
<accession>O06505</accession>
<organism>
    <name type="scientific">Desulfurococcus sp. (strain SY)</name>
    <dbReference type="NCBI Taxonomy" id="59822"/>
    <lineage>
        <taxon>Archaea</taxon>
        <taxon>Thermoproteota</taxon>
        <taxon>Thermoprotei</taxon>
        <taxon>Desulfurococcales</taxon>
        <taxon>Desulfurococcaceae</taxon>
        <taxon>Desulfurococcus</taxon>
    </lineage>
</organism>
<sequence>MPGMEYSTVSKIYGPLMIVEGVKGVAYGEVVEIETESGEKRKGQVLEARENLAIVQVFEGTRDLDVKTTSVRFTGETLKVPVSMDMLGRIFNGIGKPIDGGPEIIPEDRRDVHGAPLNPVARAYPRDFIQTGISAIDGMNTLVRGQKLPIFSGSGLPHNMLAAQIARQAKVLGEEEQFAVVFAAMGITYEEANFFKKSFEETGAIERAVLFLNLADDPAIERIITPRMALTVAEYLAFDYDMQVLVILTDMTNYAEALREISAAREEVPGRRGYPGYMYTDLATIYERGGRVRGKKGSITQMPILTMPDDDITHPIPDLTGYITEGQIVLSRELHRKGIYPPIDVLPSLSRLMKDGIGKGRTREDHPQLAQQLYAAYAEGRSLRDLVAVVGEEALSETDRKYLKFADRFEREFIAQRYDEDRSIFETLDLGWELLAELPESELKRVRKEYILKYHPKYRKRGE</sequence>
<feature type="chain" id="PRO_0000144651" description="A-type ATP synthase subunit B">
    <location>
        <begin position="1"/>
        <end position="463"/>
    </location>
</feature>
<reference key="1">
    <citation type="journal article" date="1997" name="Biochem. Biophys. Res. Commun.">
        <title>The stabilizing residues and the functional domains in the hyperthermophilic V-ATPase of Desulfurococcus.</title>
        <authorList>
            <person name="Shibui H."/>
            <person name="Hamamoto T."/>
            <person name="Yohda M."/>
            <person name="Kagawa Y."/>
        </authorList>
    </citation>
    <scope>NUCLEOTIDE SEQUENCE [GENOMIC DNA]</scope>
    <source>
        <strain>SY</strain>
    </source>
</reference>